<keyword id="KW-0067">ATP-binding</keyword>
<keyword id="KW-0131">Cell cycle</keyword>
<keyword id="KW-0132">Cell division</keyword>
<keyword id="KW-0235">DNA replication</keyword>
<keyword id="KW-0238">DNA-binding</keyword>
<keyword id="KW-0547">Nucleotide-binding</keyword>
<keyword id="KW-0539">Nucleus</keyword>
<keyword id="KW-0597">Phosphoprotein</keyword>
<keyword id="KW-1185">Reference proteome</keyword>
<feature type="chain" id="PRO_0000121775" description="Replication factor C subunit 1">
    <location>
        <begin position="1"/>
        <end position="934"/>
    </location>
</feature>
<feature type="domain" description="BRCT" evidence="3">
    <location>
        <begin position="236"/>
        <end position="326"/>
    </location>
</feature>
<feature type="region of interest" description="Disordered" evidence="4">
    <location>
        <begin position="1"/>
        <end position="190"/>
    </location>
</feature>
<feature type="region of interest" description="Disordered" evidence="4">
    <location>
        <begin position="876"/>
        <end position="934"/>
    </location>
</feature>
<feature type="compositionally biased region" description="Basic residues" evidence="4">
    <location>
        <begin position="29"/>
        <end position="39"/>
    </location>
</feature>
<feature type="compositionally biased region" description="Polar residues" evidence="4">
    <location>
        <begin position="89"/>
        <end position="104"/>
    </location>
</feature>
<feature type="compositionally biased region" description="Basic and acidic residues" evidence="4">
    <location>
        <begin position="118"/>
        <end position="128"/>
    </location>
</feature>
<feature type="compositionally biased region" description="Low complexity" evidence="4">
    <location>
        <begin position="165"/>
        <end position="186"/>
    </location>
</feature>
<feature type="compositionally biased region" description="Acidic residues" evidence="4">
    <location>
        <begin position="876"/>
        <end position="895"/>
    </location>
</feature>
<feature type="binding site" evidence="1">
    <location>
        <position position="362"/>
    </location>
    <ligand>
        <name>ATP</name>
        <dbReference type="ChEBI" id="CHEBI:30616"/>
    </ligand>
</feature>
<feature type="binding site" evidence="1">
    <location>
        <position position="374"/>
    </location>
    <ligand>
        <name>ATP</name>
        <dbReference type="ChEBI" id="CHEBI:30616"/>
    </ligand>
</feature>
<feature type="binding site" evidence="2">
    <location>
        <begin position="416"/>
        <end position="423"/>
    </location>
    <ligand>
        <name>ATP</name>
        <dbReference type="ChEBI" id="CHEBI:30616"/>
    </ligand>
</feature>
<feature type="binding site" evidence="1">
    <location>
        <position position="519"/>
    </location>
    <ligand>
        <name>ATP</name>
        <dbReference type="ChEBI" id="CHEBI:30616"/>
    </ligand>
</feature>
<feature type="modified residue" description="Phosphoserine" evidence="7">
    <location>
        <position position="27"/>
    </location>
</feature>
<organism>
    <name type="scientific">Schizosaccharomyces pombe (strain 972 / ATCC 24843)</name>
    <name type="common">Fission yeast</name>
    <dbReference type="NCBI Taxonomy" id="284812"/>
    <lineage>
        <taxon>Eukaryota</taxon>
        <taxon>Fungi</taxon>
        <taxon>Dikarya</taxon>
        <taxon>Ascomycota</taxon>
        <taxon>Taphrinomycotina</taxon>
        <taxon>Schizosaccharomycetes</taxon>
        <taxon>Schizosaccharomycetales</taxon>
        <taxon>Schizosaccharomycetaceae</taxon>
        <taxon>Schizosaccharomyces</taxon>
    </lineage>
</organism>
<protein>
    <recommendedName>
        <fullName>Replication factor C subunit 1</fullName>
        <shortName>Replication factor C1</shortName>
    </recommendedName>
</protein>
<accession>O60182</accession>
<accession>Q9US97</accession>
<comment type="function">
    <text evidence="6">The elongation of primed DNA templates by DNA polymerase delta and epsilon requires the action of the accessory proteins PCNA and activator 1. Subunit 1 is essential for cell cycle progression. It may associate with components of the DNA replication machinery and serve to enhance the efficiency of DNA replication.</text>
</comment>
<comment type="subunit">
    <text evidence="8">Heteropentamer of subunits rfc1, rfc2, rfc3, rfc4 and rfc5 that forms a complex (RFC) with PCNA in the presence of ATP. Interacts with cdc24.</text>
</comment>
<comment type="subcellular location">
    <subcellularLocation>
        <location evidence="5">Nucleus</location>
        <location evidence="5">Nucleolus</location>
    </subcellularLocation>
</comment>
<comment type="similarity">
    <text evidence="9">Belongs to the activator 1 large subunit family.</text>
</comment>
<sequence>MSNSDIRSFFGGGNAQKKPKVSPTPTSPKPKRSLKKKRIVLSDDEDGTIENSKVPASKSKVQKRNESEDISHSLPSIVHEDDKLVGSDGVSTTPDEYFEQQSTRSRSKPRIISNKETTTSKDVVHPVKTENFANDLDTTSDSKPVVHQTRATRKPAQPKAEKSTTSKSKSHTTTATTHTSRSSKSKGLPRFSDEVSQALKNVPLIDVDSMGVMAPGTFYERAATTQTPGSKPVPEGNSDCLSGISFVITGILETLTRQEATDLIKQYGGKVTGAPSVRTDFILLGENAGPRKVETIKQHKIPAINEDGLFYLITHLPASGGTGAAAQAAQQKKEQEEKKILETVARMDDSNKKESQPSQIWTSKYAPTSLKDICGNKGVVQKLQKWLQDYHKNRKSNFNKPGPDGLGLYKAVLLSGPPGIGKTTAAHLVAKLEGYDVLELNASDTRSKRLLDEQLFGVTDSQSLAGYFGTKANPVDMAKSRLVLIMDEIDGMSSGDRGGVGQLNMIIKKSMIPIICICNDRAHPKLRPLDRTTFDLRFRRPDANSMRSRIMSIAYREGLKLSPQAVDQLVQGTQSDMRQIINLLSTYKLSCSEMTPQNSQAVIKNSEKHIVMKPWDICSRYLHGGMFHPSSKSTINDKLELYFNDHEFSYLMVQENYLNTTPDRIRQEPPKMSHLKHLELISSAANSFSDSDLVDSMIHGPQQHWSLMPTHALMSCVRPASFVAGSGSRQIRFTNWLGNNSKTNKLYRMLREIQVHMRLKVSANKLDLRQHYIPILYESLPVKLSTGHSDVVPEIIELMDEYYLNREDFDSITELVLPADAGEKLMKTIPTAAKSAFTRKYNSSSHPIAFFGSSDVLPMKGSAQREVPDVEDAIEAEDEMLEEASDSEAANEEDIDLSKDKFISVPKKPKKRTKAKAEASSSSSTSRRSRKKTA</sequence>
<dbReference type="EMBL" id="CU329671">
    <property type="protein sequence ID" value="CAA18875.1"/>
    <property type="molecule type" value="Genomic_DNA"/>
</dbReference>
<dbReference type="EMBL" id="AB027931">
    <property type="protein sequence ID" value="BAA87235.1"/>
    <property type="molecule type" value="Genomic_DNA"/>
</dbReference>
<dbReference type="PIR" id="T39941">
    <property type="entry name" value="T39941"/>
</dbReference>
<dbReference type="RefSeq" id="NP_596607.1">
    <property type="nucleotide sequence ID" value="NM_001022528.2"/>
</dbReference>
<dbReference type="SMR" id="O60182"/>
<dbReference type="BioGRID" id="276954">
    <property type="interactions" value="11"/>
</dbReference>
<dbReference type="ComplexPortal" id="CPX-546">
    <property type="entry name" value="DNA replication factor C complex"/>
</dbReference>
<dbReference type="FunCoup" id="O60182">
    <property type="interactions" value="961"/>
</dbReference>
<dbReference type="IntAct" id="O60182">
    <property type="interactions" value="1"/>
</dbReference>
<dbReference type="STRING" id="284812.O60182"/>
<dbReference type="iPTMnet" id="O60182"/>
<dbReference type="PaxDb" id="4896-SPBC23E6.07c.1"/>
<dbReference type="EnsemblFungi" id="SPBC23E6.07c.1">
    <property type="protein sequence ID" value="SPBC23E6.07c.1:pep"/>
    <property type="gene ID" value="SPBC23E6.07c"/>
</dbReference>
<dbReference type="GeneID" id="2540426"/>
<dbReference type="KEGG" id="spo:2540426"/>
<dbReference type="PomBase" id="SPBC23E6.07c">
    <property type="gene designation" value="rfc1"/>
</dbReference>
<dbReference type="VEuPathDB" id="FungiDB:SPBC23E6.07c"/>
<dbReference type="eggNOG" id="KOG1968">
    <property type="taxonomic scope" value="Eukaryota"/>
</dbReference>
<dbReference type="HOGENOM" id="CLU_003574_1_1_1"/>
<dbReference type="InParanoid" id="O60182"/>
<dbReference type="OMA" id="QENYLHY"/>
<dbReference type="PhylomeDB" id="O60182"/>
<dbReference type="Reactome" id="R-SPO-110312">
    <property type="pathway name" value="Translesion synthesis by REV1"/>
</dbReference>
<dbReference type="Reactome" id="R-SPO-110314">
    <property type="pathway name" value="Recognition of DNA damage by PCNA-containing replication complex"/>
</dbReference>
<dbReference type="Reactome" id="R-SPO-110320">
    <property type="pathway name" value="Translesion Synthesis by POLH"/>
</dbReference>
<dbReference type="Reactome" id="R-SPO-5651801">
    <property type="pathway name" value="PCNA-Dependent Long Patch Base Excision Repair"/>
</dbReference>
<dbReference type="Reactome" id="R-SPO-5655862">
    <property type="pathway name" value="Translesion synthesis by POLK"/>
</dbReference>
<dbReference type="Reactome" id="R-SPO-5656121">
    <property type="pathway name" value="Translesion synthesis by POLI"/>
</dbReference>
<dbReference type="Reactome" id="R-SPO-5656169">
    <property type="pathway name" value="Termination of translesion DNA synthesis"/>
</dbReference>
<dbReference type="Reactome" id="R-SPO-5696397">
    <property type="pathway name" value="Gap-filling DNA repair synthesis and ligation in GG-NER"/>
</dbReference>
<dbReference type="Reactome" id="R-SPO-5696400">
    <property type="pathway name" value="Dual Incision in GG-NER"/>
</dbReference>
<dbReference type="Reactome" id="R-SPO-6782135">
    <property type="pathway name" value="Dual incision in TC-NER"/>
</dbReference>
<dbReference type="Reactome" id="R-SPO-6782210">
    <property type="pathway name" value="Gap-filling DNA repair synthesis and ligation in TC-NER"/>
</dbReference>
<dbReference type="Reactome" id="R-SPO-69091">
    <property type="pathway name" value="Polymerase switching"/>
</dbReference>
<dbReference type="PRO" id="PR:O60182"/>
<dbReference type="Proteomes" id="UP000002485">
    <property type="component" value="Chromosome II"/>
</dbReference>
<dbReference type="GO" id="GO:0000785">
    <property type="term" value="C:chromatin"/>
    <property type="evidence" value="ECO:0000305"/>
    <property type="project" value="PomBase"/>
</dbReference>
<dbReference type="GO" id="GO:0043599">
    <property type="term" value="C:nuclear DNA replication factor C complex"/>
    <property type="evidence" value="ECO:0000266"/>
    <property type="project" value="PomBase"/>
</dbReference>
<dbReference type="GO" id="GO:0005730">
    <property type="term" value="C:nucleolus"/>
    <property type="evidence" value="ECO:0007669"/>
    <property type="project" value="UniProtKB-SubCell"/>
</dbReference>
<dbReference type="GO" id="GO:0005634">
    <property type="term" value="C:nucleus"/>
    <property type="evidence" value="ECO:0007005"/>
    <property type="project" value="PomBase"/>
</dbReference>
<dbReference type="GO" id="GO:0005524">
    <property type="term" value="F:ATP binding"/>
    <property type="evidence" value="ECO:0007669"/>
    <property type="project" value="UniProtKB-KW"/>
</dbReference>
<dbReference type="GO" id="GO:0016887">
    <property type="term" value="F:ATP hydrolysis activity"/>
    <property type="evidence" value="ECO:0000303"/>
    <property type="project" value="PomBase"/>
</dbReference>
<dbReference type="GO" id="GO:0003682">
    <property type="term" value="F:chromatin binding"/>
    <property type="evidence" value="ECO:0000314"/>
    <property type="project" value="PomBase"/>
</dbReference>
<dbReference type="GO" id="GO:0003677">
    <property type="term" value="F:DNA binding"/>
    <property type="evidence" value="ECO:0000318"/>
    <property type="project" value="GO_Central"/>
</dbReference>
<dbReference type="GO" id="GO:0003689">
    <property type="term" value="F:DNA clamp loader activity"/>
    <property type="evidence" value="ECO:0007669"/>
    <property type="project" value="InterPro"/>
</dbReference>
<dbReference type="GO" id="GO:0051301">
    <property type="term" value="P:cell division"/>
    <property type="evidence" value="ECO:0007669"/>
    <property type="project" value="UniProtKB-KW"/>
</dbReference>
<dbReference type="GO" id="GO:1902983">
    <property type="term" value="P:DNA strand elongation involved in mitotic DNA replication"/>
    <property type="evidence" value="ECO:0000314"/>
    <property type="project" value="PomBase"/>
</dbReference>
<dbReference type="GO" id="GO:1903460">
    <property type="term" value="P:mitotic DNA replication leading strand elongation"/>
    <property type="evidence" value="ECO:0000266"/>
    <property type="project" value="PomBase"/>
</dbReference>
<dbReference type="GO" id="GO:0070914">
    <property type="term" value="P:UV-damage excision repair"/>
    <property type="evidence" value="ECO:0000314"/>
    <property type="project" value="PomBase"/>
</dbReference>
<dbReference type="CDD" id="cd00009">
    <property type="entry name" value="AAA"/>
    <property type="match status" value="1"/>
</dbReference>
<dbReference type="CDD" id="cd17752">
    <property type="entry name" value="BRCT_RFC1"/>
    <property type="match status" value="1"/>
</dbReference>
<dbReference type="CDD" id="cd18140">
    <property type="entry name" value="HLD_clamp_RFC"/>
    <property type="match status" value="1"/>
</dbReference>
<dbReference type="FunFam" id="1.10.8.60:FF:000021">
    <property type="entry name" value="Replication factor C subunit 1"/>
    <property type="match status" value="1"/>
</dbReference>
<dbReference type="FunFam" id="1.20.272.10:FF:000005">
    <property type="entry name" value="Replication factor C subunit 1"/>
    <property type="match status" value="1"/>
</dbReference>
<dbReference type="FunFam" id="3.40.50.10190:FF:000001">
    <property type="entry name" value="Replication factor C subunit 1"/>
    <property type="match status" value="1"/>
</dbReference>
<dbReference type="FunFam" id="3.40.50.300:FF:000395">
    <property type="entry name" value="Replication factor C subunit 1"/>
    <property type="match status" value="1"/>
</dbReference>
<dbReference type="Gene3D" id="1.10.8.60">
    <property type="match status" value="1"/>
</dbReference>
<dbReference type="Gene3D" id="1.20.272.10">
    <property type="match status" value="1"/>
</dbReference>
<dbReference type="Gene3D" id="3.40.50.10190">
    <property type="entry name" value="BRCT domain"/>
    <property type="match status" value="1"/>
</dbReference>
<dbReference type="Gene3D" id="3.40.50.300">
    <property type="entry name" value="P-loop containing nucleotide triphosphate hydrolases"/>
    <property type="match status" value="1"/>
</dbReference>
<dbReference type="InterPro" id="IPR003593">
    <property type="entry name" value="AAA+_ATPase"/>
</dbReference>
<dbReference type="InterPro" id="IPR003959">
    <property type="entry name" value="ATPase_AAA_core"/>
</dbReference>
<dbReference type="InterPro" id="IPR001357">
    <property type="entry name" value="BRCT_dom"/>
</dbReference>
<dbReference type="InterPro" id="IPR036420">
    <property type="entry name" value="BRCT_dom_sf"/>
</dbReference>
<dbReference type="InterPro" id="IPR008921">
    <property type="entry name" value="DNA_pol3_clamp-load_cplx_C"/>
</dbReference>
<dbReference type="InterPro" id="IPR013725">
    <property type="entry name" value="DNA_replication_fac_RFC1_C"/>
</dbReference>
<dbReference type="InterPro" id="IPR027417">
    <property type="entry name" value="P-loop_NTPase"/>
</dbReference>
<dbReference type="InterPro" id="IPR012178">
    <property type="entry name" value="RFC1"/>
</dbReference>
<dbReference type="InterPro" id="IPR047854">
    <property type="entry name" value="RFC_lid"/>
</dbReference>
<dbReference type="PANTHER" id="PTHR23389">
    <property type="entry name" value="CHROMOSOME TRANSMISSION FIDELITY FACTOR 18"/>
    <property type="match status" value="1"/>
</dbReference>
<dbReference type="PANTHER" id="PTHR23389:SF6">
    <property type="entry name" value="REPLICATION FACTOR C SUBUNIT 1"/>
    <property type="match status" value="1"/>
</dbReference>
<dbReference type="Pfam" id="PF00004">
    <property type="entry name" value="AAA"/>
    <property type="match status" value="1"/>
</dbReference>
<dbReference type="Pfam" id="PF25361">
    <property type="entry name" value="AAA_lid_RFC1"/>
    <property type="match status" value="1"/>
</dbReference>
<dbReference type="Pfam" id="PF00533">
    <property type="entry name" value="BRCT"/>
    <property type="match status" value="1"/>
</dbReference>
<dbReference type="Pfam" id="PF08519">
    <property type="entry name" value="RFC1"/>
    <property type="match status" value="1"/>
</dbReference>
<dbReference type="PIRSF" id="PIRSF036578">
    <property type="entry name" value="RFC1"/>
    <property type="match status" value="1"/>
</dbReference>
<dbReference type="SMART" id="SM00382">
    <property type="entry name" value="AAA"/>
    <property type="match status" value="1"/>
</dbReference>
<dbReference type="SMART" id="SM00292">
    <property type="entry name" value="BRCT"/>
    <property type="match status" value="1"/>
</dbReference>
<dbReference type="SUPFAM" id="SSF52113">
    <property type="entry name" value="BRCT domain"/>
    <property type="match status" value="1"/>
</dbReference>
<dbReference type="SUPFAM" id="SSF52540">
    <property type="entry name" value="P-loop containing nucleoside triphosphate hydrolases"/>
    <property type="match status" value="1"/>
</dbReference>
<dbReference type="SUPFAM" id="SSF48019">
    <property type="entry name" value="post-AAA+ oligomerization domain-like"/>
    <property type="match status" value="1"/>
</dbReference>
<dbReference type="PROSITE" id="PS50172">
    <property type="entry name" value="BRCT"/>
    <property type="match status" value="1"/>
</dbReference>
<proteinExistence type="evidence at protein level"/>
<name>RFC1_SCHPO</name>
<evidence type="ECO:0000250" key="1"/>
<evidence type="ECO:0000255" key="2"/>
<evidence type="ECO:0000255" key="3">
    <source>
        <dbReference type="PROSITE-ProRule" id="PRU00033"/>
    </source>
</evidence>
<evidence type="ECO:0000256" key="4">
    <source>
        <dbReference type="SAM" id="MobiDB-lite"/>
    </source>
</evidence>
<evidence type="ECO:0000269" key="5">
    <source>
    </source>
</evidence>
<evidence type="ECO:0000269" key="6">
    <source>
    </source>
</evidence>
<evidence type="ECO:0000269" key="7">
    <source>
    </source>
</evidence>
<evidence type="ECO:0000269" key="8">
    <source>
    </source>
</evidence>
<evidence type="ECO:0000305" key="9"/>
<reference key="1">
    <citation type="journal article" date="1999" name="Mol. Cell. Biol.">
        <title>Fission yeast cdc24 is a replication factor C- and proliferating cell nuclear antigen-interacting factor essential for S-phase completion.</title>
        <authorList>
            <person name="Tanaka H."/>
            <person name="Tanaka K."/>
            <person name="Murakami H."/>
            <person name="Okayama H."/>
        </authorList>
    </citation>
    <scope>NUCLEOTIDE SEQUENCE [GENOMIC DNA]</scope>
    <scope>INTERACTION WITH CDC24</scope>
</reference>
<reference key="2">
    <citation type="journal article" date="2002" name="Nature">
        <title>The genome sequence of Schizosaccharomyces pombe.</title>
        <authorList>
            <person name="Wood V."/>
            <person name="Gwilliam R."/>
            <person name="Rajandream M.A."/>
            <person name="Lyne M.H."/>
            <person name="Lyne R."/>
            <person name="Stewart A."/>
            <person name="Sgouros J.G."/>
            <person name="Peat N."/>
            <person name="Hayles J."/>
            <person name="Baker S.G."/>
            <person name="Basham D."/>
            <person name="Bowman S."/>
            <person name="Brooks K."/>
            <person name="Brown D."/>
            <person name="Brown S."/>
            <person name="Chillingworth T."/>
            <person name="Churcher C.M."/>
            <person name="Collins M."/>
            <person name="Connor R."/>
            <person name="Cronin A."/>
            <person name="Davis P."/>
            <person name="Feltwell T."/>
            <person name="Fraser A."/>
            <person name="Gentles S."/>
            <person name="Goble A."/>
            <person name="Hamlin N."/>
            <person name="Harris D.E."/>
            <person name="Hidalgo J."/>
            <person name="Hodgson G."/>
            <person name="Holroyd S."/>
            <person name="Hornsby T."/>
            <person name="Howarth S."/>
            <person name="Huckle E.J."/>
            <person name="Hunt S."/>
            <person name="Jagels K."/>
            <person name="James K.D."/>
            <person name="Jones L."/>
            <person name="Jones M."/>
            <person name="Leather S."/>
            <person name="McDonald S."/>
            <person name="McLean J."/>
            <person name="Mooney P."/>
            <person name="Moule S."/>
            <person name="Mungall K.L."/>
            <person name="Murphy L.D."/>
            <person name="Niblett D."/>
            <person name="Odell C."/>
            <person name="Oliver K."/>
            <person name="O'Neil S."/>
            <person name="Pearson D."/>
            <person name="Quail M.A."/>
            <person name="Rabbinowitsch E."/>
            <person name="Rutherford K.M."/>
            <person name="Rutter S."/>
            <person name="Saunders D."/>
            <person name="Seeger K."/>
            <person name="Sharp S."/>
            <person name="Skelton J."/>
            <person name="Simmonds M.N."/>
            <person name="Squares R."/>
            <person name="Squares S."/>
            <person name="Stevens K."/>
            <person name="Taylor K."/>
            <person name="Taylor R.G."/>
            <person name="Tivey A."/>
            <person name="Walsh S.V."/>
            <person name="Warren T."/>
            <person name="Whitehead S."/>
            <person name="Woodward J.R."/>
            <person name="Volckaert G."/>
            <person name="Aert R."/>
            <person name="Robben J."/>
            <person name="Grymonprez B."/>
            <person name="Weltjens I."/>
            <person name="Vanstreels E."/>
            <person name="Rieger M."/>
            <person name="Schaefer M."/>
            <person name="Mueller-Auer S."/>
            <person name="Gabel C."/>
            <person name="Fuchs M."/>
            <person name="Duesterhoeft A."/>
            <person name="Fritzc C."/>
            <person name="Holzer E."/>
            <person name="Moestl D."/>
            <person name="Hilbert H."/>
            <person name="Borzym K."/>
            <person name="Langer I."/>
            <person name="Beck A."/>
            <person name="Lehrach H."/>
            <person name="Reinhardt R."/>
            <person name="Pohl T.M."/>
            <person name="Eger P."/>
            <person name="Zimmermann W."/>
            <person name="Wedler H."/>
            <person name="Wambutt R."/>
            <person name="Purnelle B."/>
            <person name="Goffeau A."/>
            <person name="Cadieu E."/>
            <person name="Dreano S."/>
            <person name="Gloux S."/>
            <person name="Lelaure V."/>
            <person name="Mottier S."/>
            <person name="Galibert F."/>
            <person name="Aves S.J."/>
            <person name="Xiang Z."/>
            <person name="Hunt C."/>
            <person name="Moore K."/>
            <person name="Hurst S.M."/>
            <person name="Lucas M."/>
            <person name="Rochet M."/>
            <person name="Gaillardin C."/>
            <person name="Tallada V.A."/>
            <person name="Garzon A."/>
            <person name="Thode G."/>
            <person name="Daga R.R."/>
            <person name="Cruzado L."/>
            <person name="Jimenez J."/>
            <person name="Sanchez M."/>
            <person name="del Rey F."/>
            <person name="Benito J."/>
            <person name="Dominguez A."/>
            <person name="Revuelta J.L."/>
            <person name="Moreno S."/>
            <person name="Armstrong J."/>
            <person name="Forsburg S.L."/>
            <person name="Cerutti L."/>
            <person name="Lowe T."/>
            <person name="McCombie W.R."/>
            <person name="Paulsen I."/>
            <person name="Potashkin J."/>
            <person name="Shpakovski G.V."/>
            <person name="Ussery D."/>
            <person name="Barrell B.G."/>
            <person name="Nurse P."/>
        </authorList>
    </citation>
    <scope>NUCLEOTIDE SEQUENCE [LARGE SCALE GENOMIC DNA]</scope>
    <source>
        <strain>972 / ATCC 24843</strain>
    </source>
</reference>
<reference key="3">
    <citation type="journal article" date="2000" name="Genes Cells">
        <title>Large-scale screening of intracellular protein localization in living fission yeast cells by the use of a GFP-fusion genomic DNA library.</title>
        <authorList>
            <person name="Ding D.-Q."/>
            <person name="Tomita Y."/>
            <person name="Yamamoto A."/>
            <person name="Chikashige Y."/>
            <person name="Haraguchi T."/>
            <person name="Hiraoka Y."/>
        </authorList>
    </citation>
    <scope>NUCLEOTIDE SEQUENCE [LARGE SCALE GENOMIC DNA] OF 461-645</scope>
    <scope>SUBCELLULAR LOCATION</scope>
    <source>
        <strain>ATCC 38364 / 968</strain>
    </source>
</reference>
<reference key="4">
    <citation type="journal article" date="2005" name="Nucleic Acids Res.">
        <title>Contrasting effects of Elg1-RFC and Ctf18-RFC inactivation in the absence of fully functional RFC in fission yeast.</title>
        <authorList>
            <person name="Kim J."/>
            <person name="Robertson K."/>
            <person name="Mylonas K.J.L."/>
            <person name="Gray F.C."/>
            <person name="Charapitsa I."/>
            <person name="MacNeill S.A."/>
        </authorList>
    </citation>
    <scope>FUNCTION</scope>
</reference>
<reference key="5">
    <citation type="journal article" date="2008" name="J. Proteome Res.">
        <title>Phosphoproteome analysis of fission yeast.</title>
        <authorList>
            <person name="Wilson-Grady J.T."/>
            <person name="Villen J."/>
            <person name="Gygi S.P."/>
        </authorList>
    </citation>
    <scope>PHOSPHORYLATION [LARGE SCALE ANALYSIS] AT SER-27</scope>
    <scope>IDENTIFICATION BY MASS SPECTROMETRY</scope>
</reference>
<gene>
    <name type="primary">rfc1</name>
    <name type="ORF">SPBC23E6.07c</name>
</gene>